<sequence length="239" mass="25258">MVQHLTAEEIIQYISDAKKSTPIKVYLNGNFEGITYPESFKVFGSEQSKVIFCEADDWKPFYEAYGSQFEDIEIEMDRRNSAIPLKDLTNTNARIEPGAFIREQAIIEDGAVVMMGATINIGAVVGEGTMIDMNATLGGRATTGKNVHVGAGAVLAGVIEPPSASPVIIEDDVLIGANAVILEGVRVGKGAIVAAGAIVTQDVPAGAVVAGTPAKVIKQASEVQDTKKEIVAALRKLND</sequence>
<proteinExistence type="inferred from homology"/>
<name>DAPH_STAAN</name>
<organism>
    <name type="scientific">Staphylococcus aureus (strain N315)</name>
    <dbReference type="NCBI Taxonomy" id="158879"/>
    <lineage>
        <taxon>Bacteria</taxon>
        <taxon>Bacillati</taxon>
        <taxon>Bacillota</taxon>
        <taxon>Bacilli</taxon>
        <taxon>Bacillales</taxon>
        <taxon>Staphylococcaceae</taxon>
        <taxon>Staphylococcus</taxon>
    </lineage>
</organism>
<comment type="function">
    <text evidence="1">Catalyzes the transfer of an acetyl group from acetyl-CoA to tetrahydrodipicolinate.</text>
</comment>
<comment type="catalytic activity">
    <reaction evidence="1">
        <text>(S)-2,3,4,5-tetrahydrodipicolinate + acetyl-CoA + H2O = L-2-acetamido-6-oxoheptanedioate + CoA</text>
        <dbReference type="Rhea" id="RHEA:13085"/>
        <dbReference type="ChEBI" id="CHEBI:15377"/>
        <dbReference type="ChEBI" id="CHEBI:16845"/>
        <dbReference type="ChEBI" id="CHEBI:57287"/>
        <dbReference type="ChEBI" id="CHEBI:57288"/>
        <dbReference type="ChEBI" id="CHEBI:58117"/>
        <dbReference type="EC" id="2.3.1.89"/>
    </reaction>
</comment>
<comment type="pathway">
    <text evidence="1">Amino-acid biosynthesis; L-lysine biosynthesis via DAP pathway; LL-2,6-diaminopimelate from (S)-tetrahydrodipicolinate (acetylase route): step 1/3.</text>
</comment>
<comment type="similarity">
    <text evidence="1">Belongs to the transferase hexapeptide repeat family. DapH subfamily.</text>
</comment>
<reference key="1">
    <citation type="journal article" date="2001" name="Lancet">
        <title>Whole genome sequencing of meticillin-resistant Staphylococcus aureus.</title>
        <authorList>
            <person name="Kuroda M."/>
            <person name="Ohta T."/>
            <person name="Uchiyama I."/>
            <person name="Baba T."/>
            <person name="Yuzawa H."/>
            <person name="Kobayashi I."/>
            <person name="Cui L."/>
            <person name="Oguchi A."/>
            <person name="Aoki K."/>
            <person name="Nagai Y."/>
            <person name="Lian J.-Q."/>
            <person name="Ito T."/>
            <person name="Kanamori M."/>
            <person name="Matsumaru H."/>
            <person name="Maruyama A."/>
            <person name="Murakami H."/>
            <person name="Hosoyama A."/>
            <person name="Mizutani-Ui Y."/>
            <person name="Takahashi N.K."/>
            <person name="Sawano T."/>
            <person name="Inoue R."/>
            <person name="Kaito C."/>
            <person name="Sekimizu K."/>
            <person name="Hirakawa H."/>
            <person name="Kuhara S."/>
            <person name="Goto S."/>
            <person name="Yabuzaki J."/>
            <person name="Kanehisa M."/>
            <person name="Yamashita A."/>
            <person name="Oshima K."/>
            <person name="Furuya K."/>
            <person name="Yoshino C."/>
            <person name="Shiba T."/>
            <person name="Hattori M."/>
            <person name="Ogasawara N."/>
            <person name="Hayashi H."/>
            <person name="Hiramatsu K."/>
        </authorList>
    </citation>
    <scope>NUCLEOTIDE SEQUENCE [LARGE SCALE GENOMIC DNA]</scope>
    <source>
        <strain>N315</strain>
    </source>
</reference>
<feature type="chain" id="PRO_0000376696" description="2,3,4,5-tetrahydropyridine-2,6-dicarboxylate N-acetyltransferase">
    <location>
        <begin position="1"/>
        <end position="239"/>
    </location>
</feature>
<gene>
    <name evidence="1" type="primary">dapH</name>
    <name type="ordered locus">SA1229</name>
</gene>
<dbReference type="EC" id="2.3.1.89" evidence="1"/>
<dbReference type="EMBL" id="BA000018">
    <property type="protein sequence ID" value="BAB42489.1"/>
    <property type="molecule type" value="Genomic_DNA"/>
</dbReference>
<dbReference type="SMR" id="Q7A5P7"/>
<dbReference type="EnsemblBacteria" id="BAB42489">
    <property type="protein sequence ID" value="BAB42489"/>
    <property type="gene ID" value="BAB42489"/>
</dbReference>
<dbReference type="KEGG" id="sau:SA1229"/>
<dbReference type="HOGENOM" id="CLU_103751_0_0_9"/>
<dbReference type="UniPathway" id="UPA00034">
    <property type="reaction ID" value="UER00022"/>
</dbReference>
<dbReference type="GO" id="GO:0047200">
    <property type="term" value="F:tetrahydrodipicolinate N-acetyltransferase activity"/>
    <property type="evidence" value="ECO:0007669"/>
    <property type="project" value="UniProtKB-EC"/>
</dbReference>
<dbReference type="GO" id="GO:0019877">
    <property type="term" value="P:diaminopimelate biosynthetic process"/>
    <property type="evidence" value="ECO:0007669"/>
    <property type="project" value="UniProtKB-UniRule"/>
</dbReference>
<dbReference type="GO" id="GO:0009089">
    <property type="term" value="P:lysine biosynthetic process via diaminopimelate"/>
    <property type="evidence" value="ECO:0007669"/>
    <property type="project" value="UniProtKB-UniRule"/>
</dbReference>
<dbReference type="CDD" id="cd03350">
    <property type="entry name" value="LbH_THP_succinylT"/>
    <property type="match status" value="1"/>
</dbReference>
<dbReference type="Gene3D" id="2.160.10.10">
    <property type="entry name" value="Hexapeptide repeat proteins"/>
    <property type="match status" value="1"/>
</dbReference>
<dbReference type="Gene3D" id="3.30.70.250">
    <property type="entry name" value="Malonyl-CoA ACP transacylase, ACP-binding"/>
    <property type="match status" value="1"/>
</dbReference>
<dbReference type="HAMAP" id="MF_01691">
    <property type="entry name" value="DapH"/>
    <property type="match status" value="1"/>
</dbReference>
<dbReference type="InterPro" id="IPR019873">
    <property type="entry name" value="DapH"/>
</dbReference>
<dbReference type="InterPro" id="IPR013710">
    <property type="entry name" value="DapH_N"/>
</dbReference>
<dbReference type="InterPro" id="IPR001451">
    <property type="entry name" value="Hexapep"/>
</dbReference>
<dbReference type="InterPro" id="IPR018357">
    <property type="entry name" value="Hexapep_transf_CS"/>
</dbReference>
<dbReference type="InterPro" id="IPR050179">
    <property type="entry name" value="Trans_hexapeptide_repeat"/>
</dbReference>
<dbReference type="InterPro" id="IPR011004">
    <property type="entry name" value="Trimer_LpxA-like_sf"/>
</dbReference>
<dbReference type="NCBIfam" id="TIGR03532">
    <property type="entry name" value="DapD_Ac"/>
    <property type="match status" value="1"/>
</dbReference>
<dbReference type="PANTHER" id="PTHR43300:SF10">
    <property type="entry name" value="2,3,4,5-TETRAHYDROPYRIDINE-2,6-DICARBOXYLATE N-ACETYLTRANSFERASE"/>
    <property type="match status" value="1"/>
</dbReference>
<dbReference type="PANTHER" id="PTHR43300">
    <property type="entry name" value="ACETYLTRANSFERASE"/>
    <property type="match status" value="1"/>
</dbReference>
<dbReference type="Pfam" id="PF08503">
    <property type="entry name" value="DapH_N"/>
    <property type="match status" value="1"/>
</dbReference>
<dbReference type="Pfam" id="PF00132">
    <property type="entry name" value="Hexapep"/>
    <property type="match status" value="1"/>
</dbReference>
<dbReference type="Pfam" id="PF14602">
    <property type="entry name" value="Hexapep_2"/>
    <property type="match status" value="1"/>
</dbReference>
<dbReference type="SUPFAM" id="SSF51161">
    <property type="entry name" value="Trimeric LpxA-like enzymes"/>
    <property type="match status" value="1"/>
</dbReference>
<dbReference type="PROSITE" id="PS00101">
    <property type="entry name" value="HEXAPEP_TRANSFERASES"/>
    <property type="match status" value="1"/>
</dbReference>
<evidence type="ECO:0000255" key="1">
    <source>
        <dbReference type="HAMAP-Rule" id="MF_01691"/>
    </source>
</evidence>
<accession>Q7A5P7</accession>
<protein>
    <recommendedName>
        <fullName evidence="1">2,3,4,5-tetrahydropyridine-2,6-dicarboxylate N-acetyltransferase</fullName>
        <ecNumber evidence="1">2.3.1.89</ecNumber>
    </recommendedName>
    <alternativeName>
        <fullName evidence="1">Tetrahydrodipicolinate N-acetyltransferase</fullName>
        <shortName evidence="1">THP acetyltransferase</shortName>
        <shortName evidence="1">Tetrahydropicolinate acetylase</shortName>
    </alternativeName>
</protein>
<keyword id="KW-0012">Acyltransferase</keyword>
<keyword id="KW-0028">Amino-acid biosynthesis</keyword>
<keyword id="KW-0220">Diaminopimelate biosynthesis</keyword>
<keyword id="KW-0457">Lysine biosynthesis</keyword>
<keyword id="KW-0677">Repeat</keyword>
<keyword id="KW-0808">Transferase</keyword>